<gene>
    <name evidence="1" type="primary">rpsS</name>
    <name type="ordered locus">A1C_05085</name>
</gene>
<keyword id="KW-0687">Ribonucleoprotein</keyword>
<keyword id="KW-0689">Ribosomal protein</keyword>
<keyword id="KW-0694">RNA-binding</keyword>
<keyword id="KW-0699">rRNA-binding</keyword>
<proteinExistence type="inferred from homology"/>
<feature type="chain" id="PRO_1000051113" description="Small ribosomal subunit protein uS19">
    <location>
        <begin position="1"/>
        <end position="92"/>
    </location>
</feature>
<organism>
    <name type="scientific">Rickettsia akari (strain Hartford)</name>
    <dbReference type="NCBI Taxonomy" id="293614"/>
    <lineage>
        <taxon>Bacteria</taxon>
        <taxon>Pseudomonadati</taxon>
        <taxon>Pseudomonadota</taxon>
        <taxon>Alphaproteobacteria</taxon>
        <taxon>Rickettsiales</taxon>
        <taxon>Rickettsiaceae</taxon>
        <taxon>Rickettsieae</taxon>
        <taxon>Rickettsia</taxon>
        <taxon>spotted fever group</taxon>
    </lineage>
</organism>
<accession>A8GPE6</accession>
<protein>
    <recommendedName>
        <fullName evidence="1">Small ribosomal subunit protein uS19</fullName>
    </recommendedName>
    <alternativeName>
        <fullName evidence="2">30S ribosomal protein S19</fullName>
    </alternativeName>
</protein>
<evidence type="ECO:0000255" key="1">
    <source>
        <dbReference type="HAMAP-Rule" id="MF_00531"/>
    </source>
</evidence>
<evidence type="ECO:0000305" key="2"/>
<reference key="1">
    <citation type="submission" date="2007-09" db="EMBL/GenBank/DDBJ databases">
        <title>Complete genome sequence of Rickettsia akari.</title>
        <authorList>
            <person name="Madan A."/>
            <person name="Fahey J."/>
            <person name="Helton E."/>
            <person name="Ketteman M."/>
            <person name="Madan A."/>
            <person name="Rodrigues S."/>
            <person name="Sanchez A."/>
            <person name="Whiting M."/>
            <person name="Dasch G."/>
            <person name="Eremeeva M."/>
        </authorList>
    </citation>
    <scope>NUCLEOTIDE SEQUENCE [LARGE SCALE GENOMIC DNA]</scope>
    <source>
        <strain>Hartford</strain>
    </source>
</reference>
<name>RS19_RICAH</name>
<comment type="function">
    <text evidence="1">Protein S19 forms a complex with S13 that binds strongly to the 16S ribosomal RNA.</text>
</comment>
<comment type="similarity">
    <text evidence="1">Belongs to the universal ribosomal protein uS19 family.</text>
</comment>
<dbReference type="EMBL" id="CP000847">
    <property type="protein sequence ID" value="ABV75271.1"/>
    <property type="molecule type" value="Genomic_DNA"/>
</dbReference>
<dbReference type="RefSeq" id="WP_012149901.1">
    <property type="nucleotide sequence ID" value="NC_009881.1"/>
</dbReference>
<dbReference type="SMR" id="A8GPE6"/>
<dbReference type="STRING" id="293614.A1C_05085"/>
<dbReference type="KEGG" id="rak:A1C_05085"/>
<dbReference type="eggNOG" id="COG0185">
    <property type="taxonomic scope" value="Bacteria"/>
</dbReference>
<dbReference type="HOGENOM" id="CLU_144911_0_1_5"/>
<dbReference type="Proteomes" id="UP000006830">
    <property type="component" value="Chromosome"/>
</dbReference>
<dbReference type="GO" id="GO:0005737">
    <property type="term" value="C:cytoplasm"/>
    <property type="evidence" value="ECO:0007669"/>
    <property type="project" value="UniProtKB-ARBA"/>
</dbReference>
<dbReference type="GO" id="GO:0015935">
    <property type="term" value="C:small ribosomal subunit"/>
    <property type="evidence" value="ECO:0007669"/>
    <property type="project" value="InterPro"/>
</dbReference>
<dbReference type="GO" id="GO:0019843">
    <property type="term" value="F:rRNA binding"/>
    <property type="evidence" value="ECO:0007669"/>
    <property type="project" value="UniProtKB-UniRule"/>
</dbReference>
<dbReference type="GO" id="GO:0003735">
    <property type="term" value="F:structural constituent of ribosome"/>
    <property type="evidence" value="ECO:0007669"/>
    <property type="project" value="InterPro"/>
</dbReference>
<dbReference type="GO" id="GO:0000028">
    <property type="term" value="P:ribosomal small subunit assembly"/>
    <property type="evidence" value="ECO:0007669"/>
    <property type="project" value="TreeGrafter"/>
</dbReference>
<dbReference type="GO" id="GO:0006412">
    <property type="term" value="P:translation"/>
    <property type="evidence" value="ECO:0007669"/>
    <property type="project" value="UniProtKB-UniRule"/>
</dbReference>
<dbReference type="FunFam" id="3.30.860.10:FF:000001">
    <property type="entry name" value="30S ribosomal protein S19"/>
    <property type="match status" value="1"/>
</dbReference>
<dbReference type="Gene3D" id="3.30.860.10">
    <property type="entry name" value="30s Ribosomal Protein S19, Chain A"/>
    <property type="match status" value="1"/>
</dbReference>
<dbReference type="HAMAP" id="MF_00531">
    <property type="entry name" value="Ribosomal_uS19"/>
    <property type="match status" value="1"/>
</dbReference>
<dbReference type="InterPro" id="IPR002222">
    <property type="entry name" value="Ribosomal_uS19"/>
</dbReference>
<dbReference type="InterPro" id="IPR005732">
    <property type="entry name" value="Ribosomal_uS19_bac-type"/>
</dbReference>
<dbReference type="InterPro" id="IPR020934">
    <property type="entry name" value="Ribosomal_uS19_CS"/>
</dbReference>
<dbReference type="InterPro" id="IPR023575">
    <property type="entry name" value="Ribosomal_uS19_SF"/>
</dbReference>
<dbReference type="NCBIfam" id="TIGR01050">
    <property type="entry name" value="rpsS_bact"/>
    <property type="match status" value="1"/>
</dbReference>
<dbReference type="PANTHER" id="PTHR11880">
    <property type="entry name" value="RIBOSOMAL PROTEIN S19P FAMILY MEMBER"/>
    <property type="match status" value="1"/>
</dbReference>
<dbReference type="PANTHER" id="PTHR11880:SF8">
    <property type="entry name" value="SMALL RIBOSOMAL SUBUNIT PROTEIN US19M"/>
    <property type="match status" value="1"/>
</dbReference>
<dbReference type="Pfam" id="PF00203">
    <property type="entry name" value="Ribosomal_S19"/>
    <property type="match status" value="1"/>
</dbReference>
<dbReference type="PIRSF" id="PIRSF002144">
    <property type="entry name" value="Ribosomal_S19"/>
    <property type="match status" value="1"/>
</dbReference>
<dbReference type="PRINTS" id="PR00975">
    <property type="entry name" value="RIBOSOMALS19"/>
</dbReference>
<dbReference type="SUPFAM" id="SSF54570">
    <property type="entry name" value="Ribosomal protein S19"/>
    <property type="match status" value="1"/>
</dbReference>
<dbReference type="PROSITE" id="PS00323">
    <property type="entry name" value="RIBOSOMAL_S19"/>
    <property type="match status" value="1"/>
</dbReference>
<sequence>MARSIWKGPFVDGYLIKKVQKLMESGKSEMIKTWSRRSTILPIFVGFTFSVHNGNKFVPVSVNEEMVGKKLGDFAPTRTFYGHGADKKVKRK</sequence>